<dbReference type="EMBL" id="CP000950">
    <property type="protein sequence ID" value="ACA68119.1"/>
    <property type="molecule type" value="Genomic_DNA"/>
</dbReference>
<dbReference type="RefSeq" id="WP_002220283.1">
    <property type="nucleotide sequence ID" value="NZ_CP009792.1"/>
</dbReference>
<dbReference type="SMR" id="B1JJ25"/>
<dbReference type="GeneID" id="57976252"/>
<dbReference type="KEGG" id="ypy:YPK_1828"/>
<dbReference type="PATRIC" id="fig|502800.11.peg.2497"/>
<dbReference type="GO" id="GO:0005886">
    <property type="term" value="C:plasma membrane"/>
    <property type="evidence" value="ECO:0007669"/>
    <property type="project" value="UniProtKB-SubCell"/>
</dbReference>
<dbReference type="GO" id="GO:0090482">
    <property type="term" value="F:vitamin transmembrane transporter activity"/>
    <property type="evidence" value="ECO:0007669"/>
    <property type="project" value="UniProtKB-UniRule"/>
</dbReference>
<dbReference type="GO" id="GO:0015889">
    <property type="term" value="P:cobalamin transport"/>
    <property type="evidence" value="ECO:0007669"/>
    <property type="project" value="UniProtKB-UniRule"/>
</dbReference>
<dbReference type="CDD" id="cd06550">
    <property type="entry name" value="TM_ABC_iron-siderophores_like"/>
    <property type="match status" value="1"/>
</dbReference>
<dbReference type="FunFam" id="1.10.3470.10:FF:000001">
    <property type="entry name" value="Vitamin B12 ABC transporter permease BtuC"/>
    <property type="match status" value="1"/>
</dbReference>
<dbReference type="Gene3D" id="1.10.3470.10">
    <property type="entry name" value="ABC transporter involved in vitamin B12 uptake, BtuC"/>
    <property type="match status" value="1"/>
</dbReference>
<dbReference type="HAMAP" id="MF_01004">
    <property type="entry name" value="BtuC"/>
    <property type="match status" value="1"/>
</dbReference>
<dbReference type="InterPro" id="IPR037294">
    <property type="entry name" value="ABC_BtuC-like"/>
</dbReference>
<dbReference type="InterPro" id="IPR023691">
    <property type="entry name" value="ABC_transptr_BtuC"/>
</dbReference>
<dbReference type="InterPro" id="IPR000522">
    <property type="entry name" value="ABC_transptr_permease_BtuC"/>
</dbReference>
<dbReference type="NCBIfam" id="NF003001">
    <property type="entry name" value="PRK03784.1"/>
    <property type="match status" value="1"/>
</dbReference>
<dbReference type="PANTHER" id="PTHR30472">
    <property type="entry name" value="FERRIC ENTEROBACTIN TRANSPORT SYSTEM PERMEASE PROTEIN"/>
    <property type="match status" value="1"/>
</dbReference>
<dbReference type="PANTHER" id="PTHR30472:SF29">
    <property type="entry name" value="VITAMIN B12 IMPORT SYSTEM PERMEASE PROTEIN BTUC"/>
    <property type="match status" value="1"/>
</dbReference>
<dbReference type="Pfam" id="PF01032">
    <property type="entry name" value="FecCD"/>
    <property type="match status" value="1"/>
</dbReference>
<dbReference type="SUPFAM" id="SSF81345">
    <property type="entry name" value="ABC transporter involved in vitamin B12 uptake, BtuC"/>
    <property type="match status" value="1"/>
</dbReference>
<comment type="function">
    <text evidence="1">Part of the ABC transporter complex BtuCDF involved in vitamin B12 import. Involved in the translocation of the substrate across the membrane.</text>
</comment>
<comment type="subunit">
    <text evidence="1">The complex is composed of two ATP-binding proteins (BtuD), two transmembrane proteins (BtuC) and a solute-binding protein (BtuF).</text>
</comment>
<comment type="subcellular location">
    <subcellularLocation>
        <location evidence="1">Cell inner membrane</location>
        <topology evidence="1">Multi-pass membrane protein</topology>
    </subcellularLocation>
</comment>
<comment type="similarity">
    <text evidence="1">Belongs to the binding-protein-dependent transport system permease family. FecCD subfamily.</text>
</comment>
<keyword id="KW-0997">Cell inner membrane</keyword>
<keyword id="KW-1003">Cell membrane</keyword>
<keyword id="KW-0472">Membrane</keyword>
<keyword id="KW-0812">Transmembrane</keyword>
<keyword id="KW-1133">Transmembrane helix</keyword>
<keyword id="KW-0813">Transport</keyword>
<protein>
    <recommendedName>
        <fullName evidence="1">Vitamin B12 import system permease protein BtuC</fullName>
    </recommendedName>
</protein>
<organism>
    <name type="scientific">Yersinia pseudotuberculosis serotype O:3 (strain YPIII)</name>
    <dbReference type="NCBI Taxonomy" id="502800"/>
    <lineage>
        <taxon>Bacteria</taxon>
        <taxon>Pseudomonadati</taxon>
        <taxon>Pseudomonadota</taxon>
        <taxon>Gammaproteobacteria</taxon>
        <taxon>Enterobacterales</taxon>
        <taxon>Yersiniaceae</taxon>
        <taxon>Yersinia</taxon>
    </lineage>
</organism>
<evidence type="ECO:0000255" key="1">
    <source>
        <dbReference type="HAMAP-Rule" id="MF_01004"/>
    </source>
</evidence>
<name>BTUC_YERPY</name>
<feature type="chain" id="PRO_1000201562" description="Vitamin B12 import system permease protein BtuC">
    <location>
        <begin position="1"/>
        <end position="335"/>
    </location>
</feature>
<feature type="transmembrane region" description="Helical" evidence="1">
    <location>
        <begin position="25"/>
        <end position="45"/>
    </location>
</feature>
<feature type="transmembrane region" description="Helical" evidence="1">
    <location>
        <begin position="67"/>
        <end position="87"/>
    </location>
</feature>
<feature type="transmembrane region" description="Helical" evidence="1">
    <location>
        <begin position="94"/>
        <end position="113"/>
    </location>
</feature>
<feature type="transmembrane region" description="Helical" evidence="1">
    <location>
        <begin position="117"/>
        <end position="139"/>
    </location>
</feature>
<feature type="transmembrane region" description="Helical" evidence="1">
    <location>
        <begin position="153"/>
        <end position="173"/>
    </location>
</feature>
<feature type="transmembrane region" description="Helical" evidence="1">
    <location>
        <begin position="243"/>
        <end position="263"/>
    </location>
</feature>
<feature type="transmembrane region" description="Helical" evidence="1">
    <location>
        <begin position="281"/>
        <end position="301"/>
    </location>
</feature>
<feature type="transmembrane region" description="Helical" evidence="1">
    <location>
        <begin position="309"/>
        <end position="329"/>
    </location>
</feature>
<proteinExistence type="inferred from homology"/>
<reference key="1">
    <citation type="submission" date="2008-02" db="EMBL/GenBank/DDBJ databases">
        <title>Complete sequence of Yersinia pseudotuberculosis YPIII.</title>
        <authorList>
            <consortium name="US DOE Joint Genome Institute"/>
            <person name="Copeland A."/>
            <person name="Lucas S."/>
            <person name="Lapidus A."/>
            <person name="Glavina del Rio T."/>
            <person name="Dalin E."/>
            <person name="Tice H."/>
            <person name="Bruce D."/>
            <person name="Goodwin L."/>
            <person name="Pitluck S."/>
            <person name="Munk A.C."/>
            <person name="Brettin T."/>
            <person name="Detter J.C."/>
            <person name="Han C."/>
            <person name="Tapia R."/>
            <person name="Schmutz J."/>
            <person name="Larimer F."/>
            <person name="Land M."/>
            <person name="Hauser L."/>
            <person name="Challacombe J.F."/>
            <person name="Green L."/>
            <person name="Lindler L.E."/>
            <person name="Nikolich M.P."/>
            <person name="Richardson P."/>
        </authorList>
    </citation>
    <scope>NUCLEOTIDE SEQUENCE [LARGE SCALE GENOMIC DNA]</scope>
    <source>
        <strain>YPIII</strain>
    </source>
</reference>
<accession>B1JJ25</accession>
<sequence>MQTSQLFTALQQRQRQRDYRYLTGLVVMLLFALLISLCAGDVWIWPEHWFSESGKLFVWQLRLPRSMAVIMVGASLAVSGAVMQALFENPLAEPGLLGVANGAGVALVTAVLLGHGLLPIWVLSTCAIIGALLMTSILLSFTRRRLLTNAQLLLVGVALGIICSAMMTWAVYFSTSLDLRQLMYWMMGGFSGVDWRQQSLVLALLPTVIWLCCQGRVLNFMSLGEQQARQLGVSLHLWRNLLVLAIGLLVGISVALAGVISFIGLVIPHILRLTGLTDQRRLLAGCAFAGGGVLLLADVVARTVLSSAELPIGVVTATLGSPLFIWLLIRVKGVK</sequence>
<gene>
    <name evidence="1" type="primary">btuC</name>
    <name type="ordered locus">YPK_1828</name>
</gene>